<evidence type="ECO:0000255" key="1"/>
<evidence type="ECO:0000255" key="2">
    <source>
        <dbReference type="PROSITE-ProRule" id="PRU00521"/>
    </source>
</evidence>
<evidence type="ECO:0000256" key="3">
    <source>
        <dbReference type="SAM" id="MobiDB-lite"/>
    </source>
</evidence>
<evidence type="ECO:0000305" key="4"/>
<evidence type="ECO:0000312" key="5">
    <source>
        <dbReference type="HGNC" id="HGNC:15424"/>
    </source>
</evidence>
<reference key="1">
    <citation type="journal article" date="2006" name="Nature">
        <title>The DNA sequence and biological annotation of human chromosome 1.</title>
        <authorList>
            <person name="Gregory S.G."/>
            <person name="Barlow K.F."/>
            <person name="McLay K.E."/>
            <person name="Kaul R."/>
            <person name="Swarbreck D."/>
            <person name="Dunham A."/>
            <person name="Scott C.E."/>
            <person name="Howe K.L."/>
            <person name="Woodfine K."/>
            <person name="Spencer C.C.A."/>
            <person name="Jones M.C."/>
            <person name="Gillson C."/>
            <person name="Searle S."/>
            <person name="Zhou Y."/>
            <person name="Kokocinski F."/>
            <person name="McDonald L."/>
            <person name="Evans R."/>
            <person name="Phillips K."/>
            <person name="Atkinson A."/>
            <person name="Cooper R."/>
            <person name="Jones C."/>
            <person name="Hall R.E."/>
            <person name="Andrews T.D."/>
            <person name="Lloyd C."/>
            <person name="Ainscough R."/>
            <person name="Almeida J.P."/>
            <person name="Ambrose K.D."/>
            <person name="Anderson F."/>
            <person name="Andrew R.W."/>
            <person name="Ashwell R.I.S."/>
            <person name="Aubin K."/>
            <person name="Babbage A.K."/>
            <person name="Bagguley C.L."/>
            <person name="Bailey J."/>
            <person name="Beasley H."/>
            <person name="Bethel G."/>
            <person name="Bird C.P."/>
            <person name="Bray-Allen S."/>
            <person name="Brown J.Y."/>
            <person name="Brown A.J."/>
            <person name="Buckley D."/>
            <person name="Burton J."/>
            <person name="Bye J."/>
            <person name="Carder C."/>
            <person name="Chapman J.C."/>
            <person name="Clark S.Y."/>
            <person name="Clarke G."/>
            <person name="Clee C."/>
            <person name="Cobley V."/>
            <person name="Collier R.E."/>
            <person name="Corby N."/>
            <person name="Coville G.J."/>
            <person name="Davies J."/>
            <person name="Deadman R."/>
            <person name="Dunn M."/>
            <person name="Earthrowl M."/>
            <person name="Ellington A.G."/>
            <person name="Errington H."/>
            <person name="Frankish A."/>
            <person name="Frankland J."/>
            <person name="French L."/>
            <person name="Garner P."/>
            <person name="Garnett J."/>
            <person name="Gay L."/>
            <person name="Ghori M.R.J."/>
            <person name="Gibson R."/>
            <person name="Gilby L.M."/>
            <person name="Gillett W."/>
            <person name="Glithero R.J."/>
            <person name="Grafham D.V."/>
            <person name="Griffiths C."/>
            <person name="Griffiths-Jones S."/>
            <person name="Grocock R."/>
            <person name="Hammond S."/>
            <person name="Harrison E.S.I."/>
            <person name="Hart E."/>
            <person name="Haugen E."/>
            <person name="Heath P.D."/>
            <person name="Holmes S."/>
            <person name="Holt K."/>
            <person name="Howden P.J."/>
            <person name="Hunt A.R."/>
            <person name="Hunt S.E."/>
            <person name="Hunter G."/>
            <person name="Isherwood J."/>
            <person name="James R."/>
            <person name="Johnson C."/>
            <person name="Johnson D."/>
            <person name="Joy A."/>
            <person name="Kay M."/>
            <person name="Kershaw J.K."/>
            <person name="Kibukawa M."/>
            <person name="Kimberley A.M."/>
            <person name="King A."/>
            <person name="Knights A.J."/>
            <person name="Lad H."/>
            <person name="Laird G."/>
            <person name="Lawlor S."/>
            <person name="Leongamornlert D.A."/>
            <person name="Lloyd D.M."/>
            <person name="Loveland J."/>
            <person name="Lovell J."/>
            <person name="Lush M.J."/>
            <person name="Lyne R."/>
            <person name="Martin S."/>
            <person name="Mashreghi-Mohammadi M."/>
            <person name="Matthews L."/>
            <person name="Matthews N.S.W."/>
            <person name="McLaren S."/>
            <person name="Milne S."/>
            <person name="Mistry S."/>
            <person name="Moore M.J.F."/>
            <person name="Nickerson T."/>
            <person name="O'Dell C.N."/>
            <person name="Oliver K."/>
            <person name="Palmeiri A."/>
            <person name="Palmer S.A."/>
            <person name="Parker A."/>
            <person name="Patel D."/>
            <person name="Pearce A.V."/>
            <person name="Peck A.I."/>
            <person name="Pelan S."/>
            <person name="Phelps K."/>
            <person name="Phillimore B.J."/>
            <person name="Plumb R."/>
            <person name="Rajan J."/>
            <person name="Raymond C."/>
            <person name="Rouse G."/>
            <person name="Saenphimmachak C."/>
            <person name="Sehra H.K."/>
            <person name="Sheridan E."/>
            <person name="Shownkeen R."/>
            <person name="Sims S."/>
            <person name="Skuce C.D."/>
            <person name="Smith M."/>
            <person name="Steward C."/>
            <person name="Subramanian S."/>
            <person name="Sycamore N."/>
            <person name="Tracey A."/>
            <person name="Tromans A."/>
            <person name="Van Helmond Z."/>
            <person name="Wall M."/>
            <person name="Wallis J.M."/>
            <person name="White S."/>
            <person name="Whitehead S.L."/>
            <person name="Wilkinson J.E."/>
            <person name="Willey D.L."/>
            <person name="Williams H."/>
            <person name="Wilming L."/>
            <person name="Wray P.W."/>
            <person name="Wu Z."/>
            <person name="Coulson A."/>
            <person name="Vaudin M."/>
            <person name="Sulston J.E."/>
            <person name="Durbin R.M."/>
            <person name="Hubbard T."/>
            <person name="Wooster R."/>
            <person name="Dunham I."/>
            <person name="Carter N.P."/>
            <person name="McVean G."/>
            <person name="Ross M.T."/>
            <person name="Harrow J."/>
            <person name="Olson M.V."/>
            <person name="Beck S."/>
            <person name="Rogers J."/>
            <person name="Bentley D.R."/>
        </authorList>
    </citation>
    <scope>NUCLEOTIDE SEQUENCE [LARGE SCALE GENOMIC DNA]</scope>
</reference>
<reference key="2">
    <citation type="journal article" date="2004" name="Genome Res.">
        <title>The status, quality, and expansion of the NIH full-length cDNA project: the Mammalian Gene Collection (MGC).</title>
        <authorList>
            <consortium name="The MGC Project Team"/>
        </authorList>
    </citation>
    <scope>NUCLEOTIDE SEQUENCE [LARGE SCALE MRNA]</scope>
    <source>
        <tissue>Testis</tissue>
    </source>
</reference>
<feature type="chain" id="PRO_0000345418" description="Putative olfactory receptor 2W5 pseudogene">
    <location>
        <begin position="1"/>
        <end position="320"/>
    </location>
</feature>
<feature type="transmembrane region" description="Helical; Name=1" evidence="1">
    <location>
        <begin position="30"/>
        <end position="50"/>
    </location>
</feature>
<feature type="transmembrane region" description="Helical; Name=2" evidence="1">
    <location>
        <begin position="58"/>
        <end position="78"/>
    </location>
</feature>
<feature type="transmembrane region" description="Helical; Name=3" evidence="1">
    <location>
        <begin position="98"/>
        <end position="118"/>
    </location>
</feature>
<feature type="transmembrane region" description="Helical; Name=4" evidence="1">
    <location>
        <begin position="140"/>
        <end position="160"/>
    </location>
</feature>
<feature type="region of interest" description="Disordered" evidence="3">
    <location>
        <begin position="267"/>
        <end position="320"/>
    </location>
</feature>
<feature type="compositionally biased region" description="Basic and acidic residues" evidence="3">
    <location>
        <begin position="290"/>
        <end position="304"/>
    </location>
</feature>
<feature type="glycosylation site" description="N-linked (GlcNAc...) asparagine" evidence="1">
    <location>
        <position position="5"/>
    </location>
</feature>
<feature type="disulfide bond" evidence="2">
    <location>
        <begin position="97"/>
        <end position="179"/>
    </location>
</feature>
<gene>
    <name evidence="5" type="primary">OR2W5P</name>
    <name type="synonym">OR2W5</name>
</gene>
<protein>
    <recommendedName>
        <fullName evidence="5">Putative olfactory receptor 2W5 pseudogene</fullName>
    </recommendedName>
</protein>
<name>OR2W5_HUMAN</name>
<organism>
    <name type="scientific">Homo sapiens</name>
    <name type="common">Human</name>
    <dbReference type="NCBI Taxonomy" id="9606"/>
    <lineage>
        <taxon>Eukaryota</taxon>
        <taxon>Metazoa</taxon>
        <taxon>Chordata</taxon>
        <taxon>Craniata</taxon>
        <taxon>Vertebrata</taxon>
        <taxon>Euteleostomi</taxon>
        <taxon>Mammalia</taxon>
        <taxon>Eutheria</taxon>
        <taxon>Euarchontoglires</taxon>
        <taxon>Primates</taxon>
        <taxon>Haplorrhini</taxon>
        <taxon>Catarrhini</taxon>
        <taxon>Hominidae</taxon>
        <taxon>Homo</taxon>
    </lineage>
</organism>
<accession>A6NFC9</accession>
<accession>B9EH85</accession>
<sequence>MGKDNASYLQAFILVGSSDRPGLEKILFAVILIFCILTLVGNTAIILLLVMDVRLHTPMYFFLGNLSFLDLCFTASIAPQLLWNLGGPEKTITYHGCVAQLYIYMMLGSTECVLLVVMSHDRYVAVCRSLHYMAVMRPHLCLQLVTVAWCCGFLNSFIMCPQTMQLSRCGRRRVDHFLCEMPALIAMSCEETMLVEAIHLCPGGGSPPGAALPHPHLLWRDCSRGAEDEVSSRAKESLPHLLFSPHSGLSLLRNHHLRVPEAGQQLLPRSGEVPDSLLHHRHSQHQPPHLHFEEQGCEGDHEETSGVGERGWGASTRGTL</sequence>
<comment type="function">
    <text evidence="4">Odorant receptor.</text>
</comment>
<comment type="subcellular location">
    <subcellularLocation>
        <location>Cell membrane</location>
        <topology>Multi-pass membrane protein</topology>
    </subcellularLocation>
</comment>
<comment type="similarity">
    <text evidence="2">Belongs to the G-protein coupled receptor 1 family.</text>
</comment>
<comment type="caution">
    <text evidence="4">Could be the product of a pseudogene.</text>
</comment>
<comment type="online information" name="Human Olfactory Receptor Data Exploratorium (HORDE)">
    <link uri="http://genome.weizmann.ac.il/horde/card/index/symbol:OR2W5"/>
</comment>
<proteinExistence type="uncertain"/>
<dbReference type="EMBL" id="AL606804">
    <property type="status" value="NOT_ANNOTATED_CDS"/>
    <property type="molecule type" value="Genomic_DNA"/>
</dbReference>
<dbReference type="EMBL" id="BC137203">
    <property type="protein sequence ID" value="AAI37204.1"/>
    <property type="molecule type" value="mRNA"/>
</dbReference>
<dbReference type="EMBL" id="BC137204">
    <property type="protein sequence ID" value="AAI37205.1"/>
    <property type="molecule type" value="mRNA"/>
</dbReference>
<dbReference type="RefSeq" id="NP_001004698.1">
    <property type="nucleotide sequence ID" value="NM_001004698.2"/>
</dbReference>
<dbReference type="SMR" id="A6NFC9"/>
<dbReference type="FunCoup" id="A6NFC9">
    <property type="interactions" value="706"/>
</dbReference>
<dbReference type="GlyCosmos" id="A6NFC9">
    <property type="glycosylation" value="1 site, No reported glycans"/>
</dbReference>
<dbReference type="GlyGen" id="A6NFC9">
    <property type="glycosylation" value="1 site"/>
</dbReference>
<dbReference type="iPTMnet" id="A6NFC9"/>
<dbReference type="PhosphoSitePlus" id="A6NFC9"/>
<dbReference type="BioMuta" id="HGNC:15424"/>
<dbReference type="MassIVE" id="A6NFC9"/>
<dbReference type="DNASU" id="441932"/>
<dbReference type="AGR" id="HGNC:15424"/>
<dbReference type="GeneCards" id="OR2W5P"/>
<dbReference type="HGNC" id="HGNC:15424">
    <property type="gene designation" value="OR2W5P"/>
</dbReference>
<dbReference type="neXtProt" id="NX_A6NFC9"/>
<dbReference type="InParanoid" id="A6NFC9"/>
<dbReference type="PAN-GO" id="A6NFC9">
    <property type="GO annotations" value="0 GO annotations based on evolutionary models"/>
</dbReference>
<dbReference type="PhylomeDB" id="A6NFC9"/>
<dbReference type="PathwayCommons" id="A6NFC9"/>
<dbReference type="Reactome" id="R-HSA-9752946">
    <property type="pathway name" value="Expression and translocation of olfactory receptors"/>
</dbReference>
<dbReference type="BioGRID-ORCS" id="441932">
    <property type="hits" value="3 hits in 153 CRISPR screens"/>
</dbReference>
<dbReference type="ChiTaRS" id="OR2W5">
    <property type="organism name" value="human"/>
</dbReference>
<dbReference type="GenomeRNAi" id="441932"/>
<dbReference type="Pharos" id="A6NFC9">
    <property type="development level" value="Tdark"/>
</dbReference>
<dbReference type="PRO" id="PR:A6NFC9"/>
<dbReference type="Proteomes" id="UP000005640">
    <property type="component" value="Unplaced"/>
</dbReference>
<dbReference type="RNAct" id="A6NFC9">
    <property type="molecule type" value="protein"/>
</dbReference>
<dbReference type="GO" id="GO:0005886">
    <property type="term" value="C:plasma membrane"/>
    <property type="evidence" value="ECO:0000318"/>
    <property type="project" value="GO_Central"/>
</dbReference>
<dbReference type="GO" id="GO:0004930">
    <property type="term" value="F:G protein-coupled receptor activity"/>
    <property type="evidence" value="ECO:0007669"/>
    <property type="project" value="UniProtKB-KW"/>
</dbReference>
<dbReference type="GO" id="GO:0004984">
    <property type="term" value="F:olfactory receptor activity"/>
    <property type="evidence" value="ECO:0000318"/>
    <property type="project" value="GO_Central"/>
</dbReference>
<dbReference type="GO" id="GO:0050911">
    <property type="term" value="P:detection of chemical stimulus involved in sensory perception of smell"/>
    <property type="evidence" value="ECO:0000318"/>
    <property type="project" value="GO_Central"/>
</dbReference>
<dbReference type="FunFam" id="1.20.1070.10:FF:000644">
    <property type="entry name" value="Olfactory receptor 716"/>
    <property type="match status" value="1"/>
</dbReference>
<dbReference type="Gene3D" id="1.20.1070.10">
    <property type="entry name" value="Rhodopsin 7-helix transmembrane proteins"/>
    <property type="match status" value="1"/>
</dbReference>
<dbReference type="InterPro" id="IPR000276">
    <property type="entry name" value="GPCR_Rhodpsn"/>
</dbReference>
<dbReference type="InterPro" id="IPR017452">
    <property type="entry name" value="GPCR_Rhodpsn_7TM"/>
</dbReference>
<dbReference type="InterPro" id="IPR000725">
    <property type="entry name" value="Olfact_rcpt"/>
</dbReference>
<dbReference type="PANTHER" id="PTHR26453">
    <property type="entry name" value="OLFACTORY RECEPTOR"/>
    <property type="match status" value="1"/>
</dbReference>
<dbReference type="Pfam" id="PF00001">
    <property type="entry name" value="7tm_1"/>
    <property type="match status" value="1"/>
</dbReference>
<dbReference type="PRINTS" id="PR00237">
    <property type="entry name" value="GPCRRHODOPSN"/>
</dbReference>
<dbReference type="PRINTS" id="PR00245">
    <property type="entry name" value="OLFACTORYR"/>
</dbReference>
<dbReference type="SUPFAM" id="SSF81321">
    <property type="entry name" value="Family A G protein-coupled receptor-like"/>
    <property type="match status" value="1"/>
</dbReference>
<dbReference type="PROSITE" id="PS50262">
    <property type="entry name" value="G_PROTEIN_RECEP_F1_2"/>
    <property type="match status" value="1"/>
</dbReference>
<keyword id="KW-1003">Cell membrane</keyword>
<keyword id="KW-1015">Disulfide bond</keyword>
<keyword id="KW-0297">G-protein coupled receptor</keyword>
<keyword id="KW-0325">Glycoprotein</keyword>
<keyword id="KW-0472">Membrane</keyword>
<keyword id="KW-0552">Olfaction</keyword>
<keyword id="KW-0675">Receptor</keyword>
<keyword id="KW-1185">Reference proteome</keyword>
<keyword id="KW-0716">Sensory transduction</keyword>
<keyword id="KW-0807">Transducer</keyword>
<keyword id="KW-0812">Transmembrane</keyword>
<keyword id="KW-1133">Transmembrane helix</keyword>